<organism>
    <name type="scientific">Brucella anthropi (strain ATCC 49188 / DSM 6882 / CCUG 24695 / JCM 21032 / LMG 3331 / NBRC 15819 / NCTC 12168 / Alc 37)</name>
    <name type="common">Ochrobactrum anthropi</name>
    <dbReference type="NCBI Taxonomy" id="439375"/>
    <lineage>
        <taxon>Bacteria</taxon>
        <taxon>Pseudomonadati</taxon>
        <taxon>Pseudomonadota</taxon>
        <taxon>Alphaproteobacteria</taxon>
        <taxon>Hyphomicrobiales</taxon>
        <taxon>Brucellaceae</taxon>
        <taxon>Brucella/Ochrobactrum group</taxon>
        <taxon>Brucella</taxon>
    </lineage>
</organism>
<name>BIOD_BRUA4</name>
<dbReference type="EC" id="6.3.3.3" evidence="1"/>
<dbReference type="EMBL" id="CP000759">
    <property type="protein sequence ID" value="ABS15530.1"/>
    <property type="molecule type" value="Genomic_DNA"/>
</dbReference>
<dbReference type="RefSeq" id="WP_011982571.1">
    <property type="nucleotide sequence ID" value="NC_009668.1"/>
</dbReference>
<dbReference type="SMR" id="A6X2S6"/>
<dbReference type="STRING" id="439375.Oant_2821"/>
<dbReference type="KEGG" id="oan:Oant_2821"/>
<dbReference type="PATRIC" id="fig|439375.7.peg.2963"/>
<dbReference type="eggNOG" id="COG0132">
    <property type="taxonomic scope" value="Bacteria"/>
</dbReference>
<dbReference type="HOGENOM" id="CLU_072551_2_0_5"/>
<dbReference type="PhylomeDB" id="A6X2S6"/>
<dbReference type="UniPathway" id="UPA00078">
    <property type="reaction ID" value="UER00161"/>
</dbReference>
<dbReference type="Proteomes" id="UP000002301">
    <property type="component" value="Chromosome 2"/>
</dbReference>
<dbReference type="GO" id="GO:0005829">
    <property type="term" value="C:cytosol"/>
    <property type="evidence" value="ECO:0007669"/>
    <property type="project" value="TreeGrafter"/>
</dbReference>
<dbReference type="GO" id="GO:0005524">
    <property type="term" value="F:ATP binding"/>
    <property type="evidence" value="ECO:0007669"/>
    <property type="project" value="UniProtKB-UniRule"/>
</dbReference>
<dbReference type="GO" id="GO:0004141">
    <property type="term" value="F:dethiobiotin synthase activity"/>
    <property type="evidence" value="ECO:0007669"/>
    <property type="project" value="UniProtKB-UniRule"/>
</dbReference>
<dbReference type="GO" id="GO:0000287">
    <property type="term" value="F:magnesium ion binding"/>
    <property type="evidence" value="ECO:0007669"/>
    <property type="project" value="UniProtKB-UniRule"/>
</dbReference>
<dbReference type="GO" id="GO:0009102">
    <property type="term" value="P:biotin biosynthetic process"/>
    <property type="evidence" value="ECO:0007669"/>
    <property type="project" value="UniProtKB-UniRule"/>
</dbReference>
<dbReference type="CDD" id="cd03109">
    <property type="entry name" value="DTBS"/>
    <property type="match status" value="1"/>
</dbReference>
<dbReference type="Gene3D" id="3.40.50.300">
    <property type="entry name" value="P-loop containing nucleotide triphosphate hydrolases"/>
    <property type="match status" value="1"/>
</dbReference>
<dbReference type="HAMAP" id="MF_00336">
    <property type="entry name" value="BioD"/>
    <property type="match status" value="1"/>
</dbReference>
<dbReference type="InterPro" id="IPR004472">
    <property type="entry name" value="DTB_synth_BioD"/>
</dbReference>
<dbReference type="InterPro" id="IPR027417">
    <property type="entry name" value="P-loop_NTPase"/>
</dbReference>
<dbReference type="NCBIfam" id="TIGR00347">
    <property type="entry name" value="bioD"/>
    <property type="match status" value="1"/>
</dbReference>
<dbReference type="PANTHER" id="PTHR43210:SF2">
    <property type="entry name" value="ATP-DEPENDENT DETHIOBIOTIN SYNTHETASE BIOD 2"/>
    <property type="match status" value="1"/>
</dbReference>
<dbReference type="PANTHER" id="PTHR43210">
    <property type="entry name" value="DETHIOBIOTIN SYNTHETASE"/>
    <property type="match status" value="1"/>
</dbReference>
<dbReference type="Pfam" id="PF13500">
    <property type="entry name" value="AAA_26"/>
    <property type="match status" value="1"/>
</dbReference>
<dbReference type="PIRSF" id="PIRSF006755">
    <property type="entry name" value="DTB_synth"/>
    <property type="match status" value="1"/>
</dbReference>
<dbReference type="SUPFAM" id="SSF52540">
    <property type="entry name" value="P-loop containing nucleoside triphosphate hydrolases"/>
    <property type="match status" value="1"/>
</dbReference>
<comment type="function">
    <text evidence="1">Catalyzes a mechanistically unusual reaction, the ATP-dependent insertion of CO2 between the N7 and N8 nitrogen atoms of 7,8-diaminopelargonic acid (DAPA, also called 7,8-diammoniononanoate) to form a ureido ring.</text>
</comment>
<comment type="catalytic activity">
    <reaction evidence="1">
        <text>(7R,8S)-7,8-diammoniononanoate + CO2 + ATP = (4R,5S)-dethiobiotin + ADP + phosphate + 3 H(+)</text>
        <dbReference type="Rhea" id="RHEA:15805"/>
        <dbReference type="ChEBI" id="CHEBI:15378"/>
        <dbReference type="ChEBI" id="CHEBI:16526"/>
        <dbReference type="ChEBI" id="CHEBI:30616"/>
        <dbReference type="ChEBI" id="CHEBI:43474"/>
        <dbReference type="ChEBI" id="CHEBI:149469"/>
        <dbReference type="ChEBI" id="CHEBI:149473"/>
        <dbReference type="ChEBI" id="CHEBI:456216"/>
        <dbReference type="EC" id="6.3.3.3"/>
    </reaction>
</comment>
<comment type="cofactor">
    <cofactor evidence="1">
        <name>Mg(2+)</name>
        <dbReference type="ChEBI" id="CHEBI:18420"/>
    </cofactor>
</comment>
<comment type="pathway">
    <text evidence="1">Cofactor biosynthesis; biotin biosynthesis; biotin from 7,8-diaminononanoate: step 1/2.</text>
</comment>
<comment type="subunit">
    <text evidence="1">Homodimer.</text>
</comment>
<comment type="subcellular location">
    <subcellularLocation>
        <location evidence="1">Cytoplasm</location>
    </subcellularLocation>
</comment>
<comment type="similarity">
    <text evidence="1">Belongs to the dethiobiotin synthetase family.</text>
</comment>
<evidence type="ECO:0000255" key="1">
    <source>
        <dbReference type="HAMAP-Rule" id="MF_00336"/>
    </source>
</evidence>
<accession>A6X2S6</accession>
<keyword id="KW-0067">ATP-binding</keyword>
<keyword id="KW-0093">Biotin biosynthesis</keyword>
<keyword id="KW-0963">Cytoplasm</keyword>
<keyword id="KW-0436">Ligase</keyword>
<keyword id="KW-0460">Magnesium</keyword>
<keyword id="KW-0479">Metal-binding</keyword>
<keyword id="KW-0547">Nucleotide-binding</keyword>
<keyword id="KW-1185">Reference proteome</keyword>
<feature type="chain" id="PRO_1000019565" description="ATP-dependent dethiobiotin synthetase BioD">
    <location>
        <begin position="1"/>
        <end position="212"/>
    </location>
</feature>
<feature type="active site" evidence="1">
    <location>
        <position position="33"/>
    </location>
</feature>
<feature type="binding site" evidence="1">
    <location>
        <begin position="13"/>
        <end position="18"/>
    </location>
    <ligand>
        <name>ATP</name>
        <dbReference type="ChEBI" id="CHEBI:30616"/>
    </ligand>
</feature>
<feature type="binding site" evidence="1">
    <location>
        <position position="17"/>
    </location>
    <ligand>
        <name>Mg(2+)</name>
        <dbReference type="ChEBI" id="CHEBI:18420"/>
    </ligand>
</feature>
<feature type="binding site" evidence="1">
    <location>
        <position position="37"/>
    </location>
    <ligand>
        <name>substrate</name>
    </ligand>
</feature>
<feature type="binding site" evidence="1">
    <location>
        <begin position="100"/>
        <end position="103"/>
    </location>
    <ligand>
        <name>ATP</name>
        <dbReference type="ChEBI" id="CHEBI:30616"/>
    </ligand>
</feature>
<feature type="binding site" evidence="1">
    <location>
        <position position="100"/>
    </location>
    <ligand>
        <name>Mg(2+)</name>
        <dbReference type="ChEBI" id="CHEBI:18420"/>
    </ligand>
</feature>
<feature type="binding site" evidence="1">
    <location>
        <begin position="184"/>
        <end position="186"/>
    </location>
    <ligand>
        <name>ATP</name>
        <dbReference type="ChEBI" id="CHEBI:30616"/>
    </ligand>
</feature>
<protein>
    <recommendedName>
        <fullName evidence="1">ATP-dependent dethiobiotin synthetase BioD</fullName>
        <ecNumber evidence="1">6.3.3.3</ecNumber>
    </recommendedName>
    <alternativeName>
        <fullName evidence="1">DTB synthetase</fullName>
        <shortName evidence="1">DTBS</shortName>
    </alternativeName>
    <alternativeName>
        <fullName evidence="1">Dethiobiotin synthase</fullName>
    </alternativeName>
</protein>
<gene>
    <name evidence="1" type="primary">bioD</name>
    <name type="ordered locus">Oant_2821</name>
</gene>
<proteinExistence type="inferred from homology"/>
<sequence length="212" mass="23121">MNRTFIITGTDTGIGKTVFSAALAGALNAYYWKPVQSGLEEATDSETVVQLAGLSRRNVIPESWRLNTPASPHLSAQIDRVEIDTDALAVPSVDAPLVIEGAGGLHVPLTRRTTFIDVFARWRKPVILCARTGLGTINHTLLSLEALNRRNIPVLGIAFVGDHQPDTEKIIPELSGVRRLGRLPRLAKLDPDALRQAFREHFDINIFGGASE</sequence>
<reference key="1">
    <citation type="journal article" date="2011" name="J. Bacteriol.">
        <title>Genome of Ochrobactrum anthropi ATCC 49188 T, a versatile opportunistic pathogen and symbiont of several eukaryotic hosts.</title>
        <authorList>
            <person name="Chain P.S."/>
            <person name="Lang D.M."/>
            <person name="Comerci D.J."/>
            <person name="Malfatti S.A."/>
            <person name="Vergez L.M."/>
            <person name="Shin M."/>
            <person name="Ugalde R.A."/>
            <person name="Garcia E."/>
            <person name="Tolmasky M.E."/>
        </authorList>
    </citation>
    <scope>NUCLEOTIDE SEQUENCE [LARGE SCALE GENOMIC DNA]</scope>
    <source>
        <strain>ATCC 49188 / DSM 6882 / CCUG 24695 / JCM 21032 / LMG 3331 / NBRC 15819 / NCTC 12168 / Alc 37</strain>
    </source>
</reference>